<evidence type="ECO:0000255" key="1">
    <source>
        <dbReference type="HAMAP-Rule" id="MF_00121"/>
    </source>
</evidence>
<protein>
    <recommendedName>
        <fullName evidence="1">Aspartyl/glutamyl-tRNA(Asn/Gln) amidotransferase subunit B</fullName>
        <shortName evidence="1">Asp/Glu-ADT subunit B</shortName>
        <ecNumber evidence="1">6.3.5.-</ecNumber>
    </recommendedName>
</protein>
<name>GATB_FRATO</name>
<reference key="1">
    <citation type="journal article" date="2006" name="J. Bacteriol.">
        <title>Chromosome rearrangement and diversification of Francisella tularensis revealed by the type B (OSU18) genome sequence.</title>
        <authorList>
            <person name="Petrosino J.F."/>
            <person name="Xiang Q."/>
            <person name="Karpathy S.E."/>
            <person name="Jiang H."/>
            <person name="Yerrapragada S."/>
            <person name="Liu Y."/>
            <person name="Gioia J."/>
            <person name="Hemphill L."/>
            <person name="Gonzalez A."/>
            <person name="Raghavan T.M."/>
            <person name="Uzman A."/>
            <person name="Fox G.E."/>
            <person name="Highlander S."/>
            <person name="Reichard M."/>
            <person name="Morton R.J."/>
            <person name="Clinkenbeard K.D."/>
            <person name="Weinstock G.M."/>
        </authorList>
    </citation>
    <scope>NUCLEOTIDE SEQUENCE [LARGE SCALE GENOMIC DNA]</scope>
    <source>
        <strain>OSU18</strain>
    </source>
</reference>
<organism>
    <name type="scientific">Francisella tularensis subsp. holarctica (strain OSU18)</name>
    <dbReference type="NCBI Taxonomy" id="393011"/>
    <lineage>
        <taxon>Bacteria</taxon>
        <taxon>Pseudomonadati</taxon>
        <taxon>Pseudomonadota</taxon>
        <taxon>Gammaproteobacteria</taxon>
        <taxon>Thiotrichales</taxon>
        <taxon>Francisellaceae</taxon>
        <taxon>Francisella</taxon>
    </lineage>
</organism>
<proteinExistence type="inferred from homology"/>
<accession>Q0BK41</accession>
<comment type="function">
    <text evidence="1">Allows the formation of correctly charged Asn-tRNA(Asn) or Gln-tRNA(Gln) through the transamidation of misacylated Asp-tRNA(Asn) or Glu-tRNA(Gln) in organisms which lack either or both of asparaginyl-tRNA or glutaminyl-tRNA synthetases. The reaction takes place in the presence of glutamine and ATP through an activated phospho-Asp-tRNA(Asn) or phospho-Glu-tRNA(Gln).</text>
</comment>
<comment type="catalytic activity">
    <reaction evidence="1">
        <text>L-glutamyl-tRNA(Gln) + L-glutamine + ATP + H2O = L-glutaminyl-tRNA(Gln) + L-glutamate + ADP + phosphate + H(+)</text>
        <dbReference type="Rhea" id="RHEA:17521"/>
        <dbReference type="Rhea" id="RHEA-COMP:9681"/>
        <dbReference type="Rhea" id="RHEA-COMP:9684"/>
        <dbReference type="ChEBI" id="CHEBI:15377"/>
        <dbReference type="ChEBI" id="CHEBI:15378"/>
        <dbReference type="ChEBI" id="CHEBI:29985"/>
        <dbReference type="ChEBI" id="CHEBI:30616"/>
        <dbReference type="ChEBI" id="CHEBI:43474"/>
        <dbReference type="ChEBI" id="CHEBI:58359"/>
        <dbReference type="ChEBI" id="CHEBI:78520"/>
        <dbReference type="ChEBI" id="CHEBI:78521"/>
        <dbReference type="ChEBI" id="CHEBI:456216"/>
    </reaction>
</comment>
<comment type="catalytic activity">
    <reaction evidence="1">
        <text>L-aspartyl-tRNA(Asn) + L-glutamine + ATP + H2O = L-asparaginyl-tRNA(Asn) + L-glutamate + ADP + phosphate + 2 H(+)</text>
        <dbReference type="Rhea" id="RHEA:14513"/>
        <dbReference type="Rhea" id="RHEA-COMP:9674"/>
        <dbReference type="Rhea" id="RHEA-COMP:9677"/>
        <dbReference type="ChEBI" id="CHEBI:15377"/>
        <dbReference type="ChEBI" id="CHEBI:15378"/>
        <dbReference type="ChEBI" id="CHEBI:29985"/>
        <dbReference type="ChEBI" id="CHEBI:30616"/>
        <dbReference type="ChEBI" id="CHEBI:43474"/>
        <dbReference type="ChEBI" id="CHEBI:58359"/>
        <dbReference type="ChEBI" id="CHEBI:78515"/>
        <dbReference type="ChEBI" id="CHEBI:78516"/>
        <dbReference type="ChEBI" id="CHEBI:456216"/>
    </reaction>
</comment>
<comment type="subunit">
    <text evidence="1">Heterotrimer of A, B and C subunits.</text>
</comment>
<comment type="similarity">
    <text evidence="1">Belongs to the GatB/GatE family. GatB subfamily.</text>
</comment>
<sequence>MNWEMVIGLEVHIQLSTKSKLFSTSATKYGQHQNTQAAFLDLGLPGTLPVVNKEAIRKAVIFGLAVDAKISKDSFFARKNYFYPDLSKGYQISQSTNPIVQEGRLEIETSKGLKTIRIERAHLEEDAGKSVHGYIAGETGLDYNRAGTPLLEIVTYPDFRSAEEVVAYLKKLHQLVKHLGICDGNMQEGSFRCDVNLSIRPQGQAKFGTRAELKNINSFRFIDKAIEYEYARQVSVLESGGEVVQETRLYDADANETRSMRAKEDAFDYRYFPDPDLLPLVITDEYIESIKKQMPLKSEEREAVYREHLAEQEVEFLLSNLEIADYYDKVAVVIGYKPAYNWITVDLISTLNRAEKEFSSDVVPAEILLEIIANVQKDIISQANAKKVIAEYIDAPSAIEAIIEKLGLKQVSDEGMIRELVQGIIAANPQQAADFKAGKTKLMSFFVGQAMKASKGKANPKQVNQIVQEELNK</sequence>
<keyword id="KW-0067">ATP-binding</keyword>
<keyword id="KW-0436">Ligase</keyword>
<keyword id="KW-0547">Nucleotide-binding</keyword>
<keyword id="KW-0648">Protein biosynthesis</keyword>
<feature type="chain" id="PRO_1000015968" description="Aspartyl/glutamyl-tRNA(Asn/Gln) amidotransferase subunit B">
    <location>
        <begin position="1"/>
        <end position="473"/>
    </location>
</feature>
<dbReference type="EC" id="6.3.5.-" evidence="1"/>
<dbReference type="EMBL" id="CP000437">
    <property type="protein sequence ID" value="ABI83543.1"/>
    <property type="molecule type" value="Genomic_DNA"/>
</dbReference>
<dbReference type="RefSeq" id="WP_003017411.1">
    <property type="nucleotide sequence ID" value="NC_017463.1"/>
</dbReference>
<dbReference type="SMR" id="Q0BK41"/>
<dbReference type="KEGG" id="fth:FTH_1776"/>
<dbReference type="GO" id="GO:0050566">
    <property type="term" value="F:asparaginyl-tRNA synthase (glutamine-hydrolyzing) activity"/>
    <property type="evidence" value="ECO:0007669"/>
    <property type="project" value="RHEA"/>
</dbReference>
<dbReference type="GO" id="GO:0005524">
    <property type="term" value="F:ATP binding"/>
    <property type="evidence" value="ECO:0007669"/>
    <property type="project" value="UniProtKB-KW"/>
</dbReference>
<dbReference type="GO" id="GO:0050567">
    <property type="term" value="F:glutaminyl-tRNA synthase (glutamine-hydrolyzing) activity"/>
    <property type="evidence" value="ECO:0007669"/>
    <property type="project" value="UniProtKB-UniRule"/>
</dbReference>
<dbReference type="GO" id="GO:0070681">
    <property type="term" value="P:glutaminyl-tRNAGln biosynthesis via transamidation"/>
    <property type="evidence" value="ECO:0007669"/>
    <property type="project" value="TreeGrafter"/>
</dbReference>
<dbReference type="GO" id="GO:0006412">
    <property type="term" value="P:translation"/>
    <property type="evidence" value="ECO:0007669"/>
    <property type="project" value="UniProtKB-UniRule"/>
</dbReference>
<dbReference type="FunFam" id="1.10.10.410:FF:000001">
    <property type="entry name" value="Aspartyl/glutamyl-tRNA(Asn/Gln) amidotransferase subunit B"/>
    <property type="match status" value="1"/>
</dbReference>
<dbReference type="Gene3D" id="1.10.10.410">
    <property type="match status" value="1"/>
</dbReference>
<dbReference type="HAMAP" id="MF_00121">
    <property type="entry name" value="GatB"/>
    <property type="match status" value="1"/>
</dbReference>
<dbReference type="InterPro" id="IPR017959">
    <property type="entry name" value="Asn/Gln-tRNA_amidoTrfase_suB/E"/>
</dbReference>
<dbReference type="InterPro" id="IPR006075">
    <property type="entry name" value="Asn/Gln-tRNA_Trfase_suB/E_cat"/>
</dbReference>
<dbReference type="InterPro" id="IPR018027">
    <property type="entry name" value="Asn/Gln_amidotransferase"/>
</dbReference>
<dbReference type="InterPro" id="IPR003789">
    <property type="entry name" value="Asn/Gln_tRNA_amidoTrase-B-like"/>
</dbReference>
<dbReference type="InterPro" id="IPR004413">
    <property type="entry name" value="GatB"/>
</dbReference>
<dbReference type="InterPro" id="IPR023168">
    <property type="entry name" value="GatB_Yqey_C_2"/>
</dbReference>
<dbReference type="InterPro" id="IPR017958">
    <property type="entry name" value="Gln-tRNA_amidoTrfase_suB_CS"/>
</dbReference>
<dbReference type="InterPro" id="IPR014746">
    <property type="entry name" value="Gln_synth/guanido_kin_cat_dom"/>
</dbReference>
<dbReference type="NCBIfam" id="TIGR00133">
    <property type="entry name" value="gatB"/>
    <property type="match status" value="1"/>
</dbReference>
<dbReference type="NCBIfam" id="NF004012">
    <property type="entry name" value="PRK05477.1-2"/>
    <property type="match status" value="1"/>
</dbReference>
<dbReference type="NCBIfam" id="NF004014">
    <property type="entry name" value="PRK05477.1-4"/>
    <property type="match status" value="1"/>
</dbReference>
<dbReference type="PANTHER" id="PTHR11659">
    <property type="entry name" value="GLUTAMYL-TRNA GLN AMIDOTRANSFERASE SUBUNIT B MITOCHONDRIAL AND PROKARYOTIC PET112-RELATED"/>
    <property type="match status" value="1"/>
</dbReference>
<dbReference type="PANTHER" id="PTHR11659:SF0">
    <property type="entry name" value="GLUTAMYL-TRNA(GLN) AMIDOTRANSFERASE SUBUNIT B, MITOCHONDRIAL"/>
    <property type="match status" value="1"/>
</dbReference>
<dbReference type="Pfam" id="PF02934">
    <property type="entry name" value="GatB_N"/>
    <property type="match status" value="1"/>
</dbReference>
<dbReference type="Pfam" id="PF02637">
    <property type="entry name" value="GatB_Yqey"/>
    <property type="match status" value="1"/>
</dbReference>
<dbReference type="SMART" id="SM00845">
    <property type="entry name" value="GatB_Yqey"/>
    <property type="match status" value="1"/>
</dbReference>
<dbReference type="SUPFAM" id="SSF89095">
    <property type="entry name" value="GatB/YqeY motif"/>
    <property type="match status" value="1"/>
</dbReference>
<dbReference type="SUPFAM" id="SSF55931">
    <property type="entry name" value="Glutamine synthetase/guanido kinase"/>
    <property type="match status" value="1"/>
</dbReference>
<dbReference type="PROSITE" id="PS01234">
    <property type="entry name" value="GATB"/>
    <property type="match status" value="1"/>
</dbReference>
<gene>
    <name evidence="1" type="primary">gatB</name>
    <name type="ordered locus">FTH_1776</name>
</gene>